<comment type="subcellular location">
    <subcellularLocation>
        <location evidence="2">Membrane</location>
        <topology evidence="2">Multi-pass membrane protein</topology>
    </subcellularLocation>
</comment>
<comment type="similarity">
    <text evidence="2">Belongs to the TMEM185 family.</text>
</comment>
<comment type="sequence caution" evidence="2">
    <conflict type="frameshift">
        <sequence resource="EMBL-CDS" id="BAB14938"/>
    </conflict>
</comment>
<sequence>MNPRGLFQDFNPSKFLIYTCLLLFSVLLPLRLDGIIQWSYWAVFAPIWLWKLLVVAGASVGAGVWARNPRYRTEGEACVEFKAMLIAVGIHLLLLMFEVLVCDRVERGTHFWLLVFMPLFFVSPVSVAACVWGFRHDRSLELEILCSVNILQFIFIALKLDRIIHWPWLVVFVPLWILMSFLCLVVLYYIVWSLLFLRSLDVVAEQRRTHVTMAISWITIVVPLLTFEVLLVHRLDGHNTFSYVSIFVPLWLSLLTLMATTFRRKGGNHWWFGIRRDFCQFLLEIFPFLREYGNISYDLHHEDSEDAEETSVPEAPKIAPIFGKKARVVITQSPGKYVPPPPKLNIDMPD</sequence>
<reference key="1">
    <citation type="journal article" date="2004" name="Nat. Genet.">
        <title>Complete sequencing and characterization of 21,243 full-length human cDNAs.</title>
        <authorList>
            <person name="Ota T."/>
            <person name="Suzuki Y."/>
            <person name="Nishikawa T."/>
            <person name="Otsuki T."/>
            <person name="Sugiyama T."/>
            <person name="Irie R."/>
            <person name="Wakamatsu A."/>
            <person name="Hayashi K."/>
            <person name="Sato H."/>
            <person name="Nagai K."/>
            <person name="Kimura K."/>
            <person name="Makita H."/>
            <person name="Sekine M."/>
            <person name="Obayashi M."/>
            <person name="Nishi T."/>
            <person name="Shibahara T."/>
            <person name="Tanaka T."/>
            <person name="Ishii S."/>
            <person name="Yamamoto J."/>
            <person name="Saito K."/>
            <person name="Kawai Y."/>
            <person name="Isono Y."/>
            <person name="Nakamura Y."/>
            <person name="Nagahari K."/>
            <person name="Murakami K."/>
            <person name="Yasuda T."/>
            <person name="Iwayanagi T."/>
            <person name="Wagatsuma M."/>
            <person name="Shiratori A."/>
            <person name="Sudo H."/>
            <person name="Hosoiri T."/>
            <person name="Kaku Y."/>
            <person name="Kodaira H."/>
            <person name="Kondo H."/>
            <person name="Sugawara M."/>
            <person name="Takahashi M."/>
            <person name="Kanda K."/>
            <person name="Yokoi T."/>
            <person name="Furuya T."/>
            <person name="Kikkawa E."/>
            <person name="Omura Y."/>
            <person name="Abe K."/>
            <person name="Kamihara K."/>
            <person name="Katsuta N."/>
            <person name="Sato K."/>
            <person name="Tanikawa M."/>
            <person name="Yamazaki M."/>
            <person name="Ninomiya K."/>
            <person name="Ishibashi T."/>
            <person name="Yamashita H."/>
            <person name="Murakawa K."/>
            <person name="Fujimori K."/>
            <person name="Tanai H."/>
            <person name="Kimata M."/>
            <person name="Watanabe M."/>
            <person name="Hiraoka S."/>
            <person name="Chiba Y."/>
            <person name="Ishida S."/>
            <person name="Ono Y."/>
            <person name="Takiguchi S."/>
            <person name="Watanabe S."/>
            <person name="Yosida M."/>
            <person name="Hotuta T."/>
            <person name="Kusano J."/>
            <person name="Kanehori K."/>
            <person name="Takahashi-Fujii A."/>
            <person name="Hara H."/>
            <person name="Tanase T.-O."/>
            <person name="Nomura Y."/>
            <person name="Togiya S."/>
            <person name="Komai F."/>
            <person name="Hara R."/>
            <person name="Takeuchi K."/>
            <person name="Arita M."/>
            <person name="Imose N."/>
            <person name="Musashino K."/>
            <person name="Yuuki H."/>
            <person name="Oshima A."/>
            <person name="Sasaki N."/>
            <person name="Aotsuka S."/>
            <person name="Yoshikawa Y."/>
            <person name="Matsunawa H."/>
            <person name="Ichihara T."/>
            <person name="Shiohata N."/>
            <person name="Sano S."/>
            <person name="Moriya S."/>
            <person name="Momiyama H."/>
            <person name="Satoh N."/>
            <person name="Takami S."/>
            <person name="Terashima Y."/>
            <person name="Suzuki O."/>
            <person name="Nakagawa S."/>
            <person name="Senoh A."/>
            <person name="Mizoguchi H."/>
            <person name="Goto Y."/>
            <person name="Shimizu F."/>
            <person name="Wakebe H."/>
            <person name="Hishigaki H."/>
            <person name="Watanabe T."/>
            <person name="Sugiyama A."/>
            <person name="Takemoto M."/>
            <person name="Kawakami B."/>
            <person name="Yamazaki M."/>
            <person name="Watanabe K."/>
            <person name="Kumagai A."/>
            <person name="Itakura S."/>
            <person name="Fukuzumi Y."/>
            <person name="Fujimori Y."/>
            <person name="Komiyama M."/>
            <person name="Tashiro H."/>
            <person name="Tanigami A."/>
            <person name="Fujiwara T."/>
            <person name="Ono T."/>
            <person name="Yamada K."/>
            <person name="Fujii Y."/>
            <person name="Ozaki K."/>
            <person name="Hirao M."/>
            <person name="Ohmori Y."/>
            <person name="Kawabata A."/>
            <person name="Hikiji T."/>
            <person name="Kobatake N."/>
            <person name="Inagaki H."/>
            <person name="Ikema Y."/>
            <person name="Okamoto S."/>
            <person name="Okitani R."/>
            <person name="Kawakami T."/>
            <person name="Noguchi S."/>
            <person name="Itoh T."/>
            <person name="Shigeta K."/>
            <person name="Senba T."/>
            <person name="Matsumura K."/>
            <person name="Nakajima Y."/>
            <person name="Mizuno T."/>
            <person name="Morinaga M."/>
            <person name="Sasaki M."/>
            <person name="Togashi T."/>
            <person name="Oyama M."/>
            <person name="Hata H."/>
            <person name="Watanabe M."/>
            <person name="Komatsu T."/>
            <person name="Mizushima-Sugano J."/>
            <person name="Satoh T."/>
            <person name="Shirai Y."/>
            <person name="Takahashi Y."/>
            <person name="Nakagawa K."/>
            <person name="Okumura K."/>
            <person name="Nagase T."/>
            <person name="Nomura N."/>
            <person name="Kikuchi H."/>
            <person name="Masuho Y."/>
            <person name="Yamashita R."/>
            <person name="Nakai K."/>
            <person name="Yada T."/>
            <person name="Nakamura Y."/>
            <person name="Ohara O."/>
            <person name="Isogai T."/>
            <person name="Sugano S."/>
        </authorList>
    </citation>
    <scope>NUCLEOTIDE SEQUENCE [LARGE SCALE MRNA]</scope>
    <source>
        <tissue>Adipose tissue</tissue>
        <tissue>Caudate nucleus</tissue>
    </source>
</reference>
<reference key="2">
    <citation type="journal article" date="2005" name="Nature">
        <title>Generation and annotation of the DNA sequences of human chromosomes 2 and 4.</title>
        <authorList>
            <person name="Hillier L.W."/>
            <person name="Graves T.A."/>
            <person name="Fulton R.S."/>
            <person name="Fulton L.A."/>
            <person name="Pepin K.H."/>
            <person name="Minx P."/>
            <person name="Wagner-McPherson C."/>
            <person name="Layman D."/>
            <person name="Wylie K."/>
            <person name="Sekhon M."/>
            <person name="Becker M.C."/>
            <person name="Fewell G.A."/>
            <person name="Delehaunty K.D."/>
            <person name="Miner T.L."/>
            <person name="Nash W.E."/>
            <person name="Kremitzki C."/>
            <person name="Oddy L."/>
            <person name="Du H."/>
            <person name="Sun H."/>
            <person name="Bradshaw-Cordum H."/>
            <person name="Ali J."/>
            <person name="Carter J."/>
            <person name="Cordes M."/>
            <person name="Harris A."/>
            <person name="Isak A."/>
            <person name="van Brunt A."/>
            <person name="Nguyen C."/>
            <person name="Du F."/>
            <person name="Courtney L."/>
            <person name="Kalicki J."/>
            <person name="Ozersky P."/>
            <person name="Abbott S."/>
            <person name="Armstrong J."/>
            <person name="Belter E.A."/>
            <person name="Caruso L."/>
            <person name="Cedroni M."/>
            <person name="Cotton M."/>
            <person name="Davidson T."/>
            <person name="Desai A."/>
            <person name="Elliott G."/>
            <person name="Erb T."/>
            <person name="Fronick C."/>
            <person name="Gaige T."/>
            <person name="Haakenson W."/>
            <person name="Haglund K."/>
            <person name="Holmes A."/>
            <person name="Harkins R."/>
            <person name="Kim K."/>
            <person name="Kruchowski S.S."/>
            <person name="Strong C.M."/>
            <person name="Grewal N."/>
            <person name="Goyea E."/>
            <person name="Hou S."/>
            <person name="Levy A."/>
            <person name="Martinka S."/>
            <person name="Mead K."/>
            <person name="McLellan M.D."/>
            <person name="Meyer R."/>
            <person name="Randall-Maher J."/>
            <person name="Tomlinson C."/>
            <person name="Dauphin-Kohlberg S."/>
            <person name="Kozlowicz-Reilly A."/>
            <person name="Shah N."/>
            <person name="Swearengen-Shahid S."/>
            <person name="Snider J."/>
            <person name="Strong J.T."/>
            <person name="Thompson J."/>
            <person name="Yoakum M."/>
            <person name="Leonard S."/>
            <person name="Pearman C."/>
            <person name="Trani L."/>
            <person name="Radionenko M."/>
            <person name="Waligorski J.E."/>
            <person name="Wang C."/>
            <person name="Rock S.M."/>
            <person name="Tin-Wollam A.-M."/>
            <person name="Maupin R."/>
            <person name="Latreille P."/>
            <person name="Wendl M.C."/>
            <person name="Yang S.-P."/>
            <person name="Pohl C."/>
            <person name="Wallis J.W."/>
            <person name="Spieth J."/>
            <person name="Bieri T.A."/>
            <person name="Berkowicz N."/>
            <person name="Nelson J.O."/>
            <person name="Osborne J."/>
            <person name="Ding L."/>
            <person name="Meyer R."/>
            <person name="Sabo A."/>
            <person name="Shotland Y."/>
            <person name="Sinha P."/>
            <person name="Wohldmann P.E."/>
            <person name="Cook L.L."/>
            <person name="Hickenbotham M.T."/>
            <person name="Eldred J."/>
            <person name="Williams D."/>
            <person name="Jones T.A."/>
            <person name="She X."/>
            <person name="Ciccarelli F.D."/>
            <person name="Izaurralde E."/>
            <person name="Taylor J."/>
            <person name="Schmutz J."/>
            <person name="Myers R.M."/>
            <person name="Cox D.R."/>
            <person name="Huang X."/>
            <person name="McPherson J.D."/>
            <person name="Mardis E.R."/>
            <person name="Clifton S.W."/>
            <person name="Warren W.C."/>
            <person name="Chinwalla A.T."/>
            <person name="Eddy S.R."/>
            <person name="Marra M.A."/>
            <person name="Ovcharenko I."/>
            <person name="Furey T.S."/>
            <person name="Miller W."/>
            <person name="Eichler E.E."/>
            <person name="Bork P."/>
            <person name="Suyama M."/>
            <person name="Torrents D."/>
            <person name="Waterston R.H."/>
            <person name="Wilson R.K."/>
        </authorList>
    </citation>
    <scope>NUCLEOTIDE SEQUENCE [LARGE SCALE GENOMIC DNA]</scope>
</reference>
<reference key="3">
    <citation type="journal article" date="2004" name="Genome Res.">
        <title>The status, quality, and expansion of the NIH full-length cDNA project: the Mammalian Gene Collection (MGC).</title>
        <authorList>
            <consortium name="The MGC Project Team"/>
        </authorList>
    </citation>
    <scope>NUCLEOTIDE SEQUENCE [LARGE SCALE MRNA]</scope>
    <source>
        <tissue>Colon</tissue>
        <tissue>Skin</tissue>
    </source>
</reference>
<reference key="4">
    <citation type="journal article" date="2008" name="Proc. Natl. Acad. Sci. U.S.A.">
        <title>A quantitative atlas of mitotic phosphorylation.</title>
        <authorList>
            <person name="Dephoure N."/>
            <person name="Zhou C."/>
            <person name="Villen J."/>
            <person name="Beausoleil S.A."/>
            <person name="Bakalarski C.E."/>
            <person name="Elledge S.J."/>
            <person name="Gygi S.P."/>
        </authorList>
    </citation>
    <scope>IDENTIFICATION BY MASS SPECTROMETRY [LARGE SCALE ANALYSIS]</scope>
    <source>
        <tissue>Cervix carcinoma</tissue>
    </source>
</reference>
<protein>
    <recommendedName>
        <fullName>Transmembrane protein 185B</fullName>
    </recommendedName>
    <alternativeName>
        <fullName>Protein FAM11B</fullName>
    </alternativeName>
</protein>
<organism>
    <name type="scientific">Homo sapiens</name>
    <name type="common">Human</name>
    <dbReference type="NCBI Taxonomy" id="9606"/>
    <lineage>
        <taxon>Eukaryota</taxon>
        <taxon>Metazoa</taxon>
        <taxon>Chordata</taxon>
        <taxon>Craniata</taxon>
        <taxon>Vertebrata</taxon>
        <taxon>Euteleostomi</taxon>
        <taxon>Mammalia</taxon>
        <taxon>Eutheria</taxon>
        <taxon>Euarchontoglires</taxon>
        <taxon>Primates</taxon>
        <taxon>Haplorrhini</taxon>
        <taxon>Catarrhini</taxon>
        <taxon>Hominidae</taxon>
        <taxon>Homo</taxon>
    </lineage>
</organism>
<gene>
    <name type="primary">TMEM185B</name>
    <name type="synonym">FAM11B</name>
</gene>
<evidence type="ECO:0000255" key="1"/>
<evidence type="ECO:0000305" key="2"/>
<proteinExistence type="evidence at protein level"/>
<accession>Q9H7F4</accession>
<accession>A8K1G5</accession>
<accession>Q53T33</accession>
<accession>Q66K44</accession>
<accession>Q8IZ77</accession>
<dbReference type="EMBL" id="AK024632">
    <property type="protein sequence ID" value="BAB14938.1"/>
    <property type="status" value="ALT_FRAME"/>
    <property type="molecule type" value="mRNA"/>
</dbReference>
<dbReference type="EMBL" id="AK289880">
    <property type="protein sequence ID" value="BAF82569.1"/>
    <property type="molecule type" value="mRNA"/>
</dbReference>
<dbReference type="EMBL" id="AC012363">
    <property type="protein sequence ID" value="AAY14799.1"/>
    <property type="molecule type" value="Genomic_DNA"/>
</dbReference>
<dbReference type="EMBL" id="BC016849">
    <property type="status" value="NOT_ANNOTATED_CDS"/>
    <property type="molecule type" value="mRNA"/>
</dbReference>
<dbReference type="EMBL" id="BC080607">
    <property type="status" value="NOT_ANNOTATED_CDS"/>
    <property type="molecule type" value="mRNA"/>
</dbReference>
<dbReference type="CCDS" id="CCDS58722.1"/>
<dbReference type="RefSeq" id="NP_077026.2">
    <property type="nucleotide sequence ID" value="NM_024121.2"/>
</dbReference>
<dbReference type="BioGRID" id="122555">
    <property type="interactions" value="4"/>
</dbReference>
<dbReference type="FunCoup" id="Q9H7F4">
    <property type="interactions" value="1545"/>
</dbReference>
<dbReference type="IntAct" id="Q9H7F4">
    <property type="interactions" value="1"/>
</dbReference>
<dbReference type="STRING" id="9606.ENSP00000453399"/>
<dbReference type="iPTMnet" id="Q9H7F4"/>
<dbReference type="PhosphoSitePlus" id="Q9H7F4"/>
<dbReference type="SwissPalm" id="Q9H7F4"/>
<dbReference type="BioMuta" id="TMEM185B"/>
<dbReference type="DMDM" id="50400653"/>
<dbReference type="jPOST" id="Q9H7F4"/>
<dbReference type="MassIVE" id="Q9H7F4"/>
<dbReference type="PaxDb" id="9606-ENSP00000453399"/>
<dbReference type="PeptideAtlas" id="Q9H7F4"/>
<dbReference type="ProteomicsDB" id="81120"/>
<dbReference type="DNASU" id="79134"/>
<dbReference type="Ensembl" id="ENST00000426077.3">
    <property type="protein sequence ID" value="ENSP00000453399.1"/>
    <property type="gene ID" value="ENSG00000226479.4"/>
</dbReference>
<dbReference type="GeneID" id="79134"/>
<dbReference type="KEGG" id="hsa:79134"/>
<dbReference type="MANE-Select" id="ENST00000426077.3">
    <property type="protein sequence ID" value="ENSP00000453399.1"/>
    <property type="RefSeq nucleotide sequence ID" value="NM_024121.3"/>
    <property type="RefSeq protein sequence ID" value="NP_077026.2"/>
</dbReference>
<dbReference type="UCSC" id="uc002tmj.3">
    <property type="organism name" value="human"/>
</dbReference>
<dbReference type="AGR" id="HGNC:18896"/>
<dbReference type="CTD" id="79134"/>
<dbReference type="GeneCards" id="TMEM185B"/>
<dbReference type="HGNC" id="HGNC:18896">
    <property type="gene designation" value="TMEM185B"/>
</dbReference>
<dbReference type="HPA" id="ENSG00000226479">
    <property type="expression patterns" value="Low tissue specificity"/>
</dbReference>
<dbReference type="neXtProt" id="NX_Q9H7F4"/>
<dbReference type="OpenTargets" id="ENSG00000226479"/>
<dbReference type="PharmGKB" id="PA166048952"/>
<dbReference type="VEuPathDB" id="HostDB:ENSG00000226479"/>
<dbReference type="eggNOG" id="KOG3879">
    <property type="taxonomic scope" value="Eukaryota"/>
</dbReference>
<dbReference type="GeneTree" id="ENSGT00940000163000"/>
<dbReference type="HOGENOM" id="CLU_053027_0_0_1"/>
<dbReference type="InParanoid" id="Q9H7F4"/>
<dbReference type="OMA" id="PFEFEFF"/>
<dbReference type="OrthoDB" id="72976at2759"/>
<dbReference type="PAN-GO" id="Q9H7F4">
    <property type="GO annotations" value="0 GO annotations based on evolutionary models"/>
</dbReference>
<dbReference type="PhylomeDB" id="Q9H7F4"/>
<dbReference type="TreeFam" id="TF313829"/>
<dbReference type="PathwayCommons" id="Q9H7F4"/>
<dbReference type="SignaLink" id="Q9H7F4"/>
<dbReference type="BioGRID-ORCS" id="79134">
    <property type="hits" value="12 hits in 1159 CRISPR screens"/>
</dbReference>
<dbReference type="ChiTaRS" id="TMEM185B">
    <property type="organism name" value="human"/>
</dbReference>
<dbReference type="GenomeRNAi" id="79134"/>
<dbReference type="Pharos" id="Q9H7F4">
    <property type="development level" value="Tdark"/>
</dbReference>
<dbReference type="PRO" id="PR:Q9H7F4"/>
<dbReference type="Proteomes" id="UP000005640">
    <property type="component" value="Chromosome 2"/>
</dbReference>
<dbReference type="RNAct" id="Q9H7F4">
    <property type="molecule type" value="protein"/>
</dbReference>
<dbReference type="Bgee" id="ENSG00000226479">
    <property type="expression patterns" value="Expressed in secondary oocyte and 180 other cell types or tissues"/>
</dbReference>
<dbReference type="GO" id="GO:0016020">
    <property type="term" value="C:membrane"/>
    <property type="evidence" value="ECO:0007669"/>
    <property type="project" value="UniProtKB-SubCell"/>
</dbReference>
<dbReference type="InterPro" id="IPR019396">
    <property type="entry name" value="TM_Fragile-X-F-assoc"/>
</dbReference>
<dbReference type="PANTHER" id="PTHR13568">
    <property type="entry name" value="FAM11A, B PROTEIN"/>
    <property type="match status" value="1"/>
</dbReference>
<dbReference type="PANTHER" id="PTHR13568:SF5">
    <property type="entry name" value="TRANSMEMBRANE PROTEIN 185B"/>
    <property type="match status" value="1"/>
</dbReference>
<dbReference type="Pfam" id="PF10269">
    <property type="entry name" value="Tmemb_185A"/>
    <property type="match status" value="1"/>
</dbReference>
<name>T185B_HUMAN</name>
<keyword id="KW-0472">Membrane</keyword>
<keyword id="KW-1267">Proteomics identification</keyword>
<keyword id="KW-1185">Reference proteome</keyword>
<keyword id="KW-0812">Transmembrane</keyword>
<keyword id="KW-1133">Transmembrane helix</keyword>
<feature type="chain" id="PRO_0000188009" description="Transmembrane protein 185B">
    <location>
        <begin position="1"/>
        <end position="350"/>
    </location>
</feature>
<feature type="transmembrane region" description="Helical" evidence="1">
    <location>
        <begin position="16"/>
        <end position="36"/>
    </location>
</feature>
<feature type="transmembrane region" description="Helical" evidence="1">
    <location>
        <begin position="41"/>
        <end position="61"/>
    </location>
</feature>
<feature type="transmembrane region" description="Helical" evidence="1">
    <location>
        <begin position="81"/>
        <end position="101"/>
    </location>
</feature>
<feature type="transmembrane region" description="Helical" evidence="1">
    <location>
        <begin position="111"/>
        <end position="131"/>
    </location>
</feature>
<feature type="transmembrane region" description="Helical" evidence="1">
    <location>
        <begin position="168"/>
        <end position="188"/>
    </location>
</feature>
<feature type="transmembrane region" description="Helical" evidence="1">
    <location>
        <begin position="211"/>
        <end position="231"/>
    </location>
</feature>
<feature type="transmembrane region" description="Helical" evidence="1">
    <location>
        <begin position="240"/>
        <end position="260"/>
    </location>
</feature>
<feature type="sequence conflict" description="In Ref. 3; BC080607." evidence="2" ref="3">
    <original>A</original>
    <variation>G</variation>
    <location>
        <position position="42"/>
    </location>
</feature>
<feature type="sequence conflict" description="In Ref. 1; BAB14938." evidence="2" ref="1">
    <original>S</original>
    <variation>F</variation>
    <location>
        <position position="59"/>
    </location>
</feature>
<feature type="sequence conflict" description="In Ref. 1; BAF82569." evidence="2" ref="1">
    <original>E</original>
    <variation>G</variation>
    <location>
        <position position="76"/>
    </location>
</feature>